<gene>
    <name evidence="1" type="primary">ecfA2</name>
    <name type="synonym">cbiO2</name>
    <name type="ordered locus">M6_Spy1862</name>
</gene>
<organism>
    <name type="scientific">Streptococcus pyogenes serotype M6 (strain ATCC BAA-946 / MGAS10394)</name>
    <dbReference type="NCBI Taxonomy" id="286636"/>
    <lineage>
        <taxon>Bacteria</taxon>
        <taxon>Bacillati</taxon>
        <taxon>Bacillota</taxon>
        <taxon>Bacilli</taxon>
        <taxon>Lactobacillales</taxon>
        <taxon>Streptococcaceae</taxon>
        <taxon>Streptococcus</taxon>
    </lineage>
</organism>
<comment type="function">
    <text evidence="1">ATP-binding (A) component of a common energy-coupling factor (ECF) ABC-transporter complex. Unlike classic ABC transporters this ECF transporter provides the energy necessary to transport a number of different substrates.</text>
</comment>
<comment type="subunit">
    <text evidence="1">Forms a stable energy-coupling factor (ECF) transporter complex composed of 2 membrane-embedded substrate-binding proteins (S component), 2 ATP-binding proteins (A component) and 2 transmembrane proteins (T component).</text>
</comment>
<comment type="subcellular location">
    <subcellularLocation>
        <location evidence="1">Cell membrane</location>
        <topology evidence="1">Peripheral membrane protein</topology>
    </subcellularLocation>
</comment>
<comment type="similarity">
    <text evidence="1">Belongs to the ABC transporter superfamily. Energy-coupling factor EcfA family.</text>
</comment>
<reference key="1">
    <citation type="journal article" date="2004" name="J. Infect. Dis.">
        <title>Progress toward characterization of the group A Streptococcus metagenome: complete genome sequence of a macrolide-resistant serotype M6 strain.</title>
        <authorList>
            <person name="Banks D.J."/>
            <person name="Porcella S.F."/>
            <person name="Barbian K.D."/>
            <person name="Beres S.B."/>
            <person name="Philips L.E."/>
            <person name="Voyich J.M."/>
            <person name="DeLeo F.R."/>
            <person name="Martin J.M."/>
            <person name="Somerville G.A."/>
            <person name="Musser J.M."/>
        </authorList>
    </citation>
    <scope>NUCLEOTIDE SEQUENCE [LARGE SCALE GENOMIC DNA]</scope>
    <source>
        <strain>ATCC BAA-946 / MGAS10394</strain>
    </source>
</reference>
<evidence type="ECO:0000255" key="1">
    <source>
        <dbReference type="HAMAP-Rule" id="MF_01710"/>
    </source>
</evidence>
<protein>
    <recommendedName>
        <fullName evidence="1">Energy-coupling factor transporter ATP-binding protein EcfA2</fullName>
        <shortName evidence="1">ECF transporter A component EcfA2</shortName>
        <ecNumber evidence="1">7.-.-.-</ecNumber>
    </recommendedName>
</protein>
<keyword id="KW-0067">ATP-binding</keyword>
<keyword id="KW-1003">Cell membrane</keyword>
<keyword id="KW-0472">Membrane</keyword>
<keyword id="KW-0547">Nucleotide-binding</keyword>
<keyword id="KW-1278">Translocase</keyword>
<keyword id="KW-0813">Transport</keyword>
<feature type="chain" id="PRO_0000092109" description="Energy-coupling factor transporter ATP-binding protein EcfA2">
    <location>
        <begin position="1"/>
        <end position="280"/>
    </location>
</feature>
<feature type="domain" description="ABC transporter" evidence="1">
    <location>
        <begin position="3"/>
        <end position="245"/>
    </location>
</feature>
<feature type="binding site" evidence="1">
    <location>
        <begin position="40"/>
        <end position="47"/>
    </location>
    <ligand>
        <name>ATP</name>
        <dbReference type="ChEBI" id="CHEBI:30616"/>
    </ligand>
</feature>
<proteinExistence type="inferred from homology"/>
<accession>Q5X9B6</accession>
<dbReference type="EC" id="7.-.-.-" evidence="1"/>
<dbReference type="EMBL" id="CP000003">
    <property type="protein sequence ID" value="AAT87997.1"/>
    <property type="molecule type" value="Genomic_DNA"/>
</dbReference>
<dbReference type="RefSeq" id="WP_002982066.1">
    <property type="nucleotide sequence ID" value="NC_006086.1"/>
</dbReference>
<dbReference type="SMR" id="Q5X9B6"/>
<dbReference type="KEGG" id="spa:M6_Spy1862"/>
<dbReference type="HOGENOM" id="CLU_000604_1_22_9"/>
<dbReference type="Proteomes" id="UP000001167">
    <property type="component" value="Chromosome"/>
</dbReference>
<dbReference type="GO" id="GO:0043190">
    <property type="term" value="C:ATP-binding cassette (ABC) transporter complex"/>
    <property type="evidence" value="ECO:0007669"/>
    <property type="project" value="TreeGrafter"/>
</dbReference>
<dbReference type="GO" id="GO:0005524">
    <property type="term" value="F:ATP binding"/>
    <property type="evidence" value="ECO:0007669"/>
    <property type="project" value="UniProtKB-KW"/>
</dbReference>
<dbReference type="GO" id="GO:0016887">
    <property type="term" value="F:ATP hydrolysis activity"/>
    <property type="evidence" value="ECO:0007669"/>
    <property type="project" value="InterPro"/>
</dbReference>
<dbReference type="GO" id="GO:0042626">
    <property type="term" value="F:ATPase-coupled transmembrane transporter activity"/>
    <property type="evidence" value="ECO:0007669"/>
    <property type="project" value="TreeGrafter"/>
</dbReference>
<dbReference type="CDD" id="cd03225">
    <property type="entry name" value="ABC_cobalt_CbiO_domain1"/>
    <property type="match status" value="1"/>
</dbReference>
<dbReference type="FunFam" id="3.40.50.300:FF:000224">
    <property type="entry name" value="Energy-coupling factor transporter ATP-binding protein EcfA"/>
    <property type="match status" value="1"/>
</dbReference>
<dbReference type="Gene3D" id="3.40.50.300">
    <property type="entry name" value="P-loop containing nucleotide triphosphate hydrolases"/>
    <property type="match status" value="1"/>
</dbReference>
<dbReference type="InterPro" id="IPR003593">
    <property type="entry name" value="AAA+_ATPase"/>
</dbReference>
<dbReference type="InterPro" id="IPR003439">
    <property type="entry name" value="ABC_transporter-like_ATP-bd"/>
</dbReference>
<dbReference type="InterPro" id="IPR017871">
    <property type="entry name" value="ABC_transporter-like_CS"/>
</dbReference>
<dbReference type="InterPro" id="IPR015856">
    <property type="entry name" value="ABC_transpr_CbiO/EcfA_su"/>
</dbReference>
<dbReference type="InterPro" id="IPR050095">
    <property type="entry name" value="ECF_ABC_transporter_ATP-bd"/>
</dbReference>
<dbReference type="InterPro" id="IPR030946">
    <property type="entry name" value="EcfA2"/>
</dbReference>
<dbReference type="InterPro" id="IPR027417">
    <property type="entry name" value="P-loop_NTPase"/>
</dbReference>
<dbReference type="NCBIfam" id="TIGR04521">
    <property type="entry name" value="ECF_ATPase_2"/>
    <property type="match status" value="1"/>
</dbReference>
<dbReference type="PANTHER" id="PTHR43553:SF27">
    <property type="entry name" value="ENERGY-COUPLING FACTOR TRANSPORTER ATP-BINDING PROTEIN ECFA2"/>
    <property type="match status" value="1"/>
</dbReference>
<dbReference type="PANTHER" id="PTHR43553">
    <property type="entry name" value="HEAVY METAL TRANSPORTER"/>
    <property type="match status" value="1"/>
</dbReference>
<dbReference type="Pfam" id="PF00005">
    <property type="entry name" value="ABC_tran"/>
    <property type="match status" value="1"/>
</dbReference>
<dbReference type="SMART" id="SM00382">
    <property type="entry name" value="AAA"/>
    <property type="match status" value="1"/>
</dbReference>
<dbReference type="SUPFAM" id="SSF52540">
    <property type="entry name" value="P-loop containing nucleoside triphosphate hydrolases"/>
    <property type="match status" value="1"/>
</dbReference>
<dbReference type="PROSITE" id="PS00211">
    <property type="entry name" value="ABC_TRANSPORTER_1"/>
    <property type="match status" value="1"/>
</dbReference>
<dbReference type="PROSITE" id="PS50893">
    <property type="entry name" value="ABC_TRANSPORTER_2"/>
    <property type="match status" value="1"/>
</dbReference>
<dbReference type="PROSITE" id="PS51246">
    <property type="entry name" value="CBIO"/>
    <property type="match status" value="1"/>
</dbReference>
<name>ECFA2_STRP6</name>
<sequence>MSINLQNVSYTYQAGTPFEGRALFNINLDILDGSYTAFIGHTGSGKSTIMQLLNGLHVPTTGIVSVDKQDITNHSKNKEIKSIRKHVGLVFQFPESQLFEETVLKDVAFGPQNFGVSPEEAEALAREKLALVGISENLFEKNPFELSGGQMRRVAIAGILAMQPKVLVLDEPTAGLDPKGRKELMTIFKKLHQSGMTIVLVTHLMDDVANYADFVYVLDKGKIILSGKPKTIFQQVSLLEKKQLGVPKVTKLAQRLVDRGIPISSLPITLEELREVLKHG</sequence>